<keyword id="KW-0030">Aminoacyl-tRNA synthetase</keyword>
<keyword id="KW-0067">ATP-binding</keyword>
<keyword id="KW-0963">Cytoplasm</keyword>
<keyword id="KW-0436">Ligase</keyword>
<keyword id="KW-0547">Nucleotide-binding</keyword>
<keyword id="KW-0648">Protein biosynthesis</keyword>
<keyword id="KW-1185">Reference proteome</keyword>
<dbReference type="EC" id="6.1.1.21" evidence="1"/>
<dbReference type="EMBL" id="CP001616">
    <property type="protein sequence ID" value="ACQ92517.1"/>
    <property type="molecule type" value="Genomic_DNA"/>
</dbReference>
<dbReference type="RefSeq" id="WP_012729116.1">
    <property type="nucleotide sequence ID" value="NC_012691.1"/>
</dbReference>
<dbReference type="SMR" id="C4LC38"/>
<dbReference type="STRING" id="595494.Tola_0889"/>
<dbReference type="KEGG" id="tau:Tola_0889"/>
<dbReference type="eggNOG" id="COG0124">
    <property type="taxonomic scope" value="Bacteria"/>
</dbReference>
<dbReference type="HOGENOM" id="CLU_025113_1_1_6"/>
<dbReference type="OrthoDB" id="9800814at2"/>
<dbReference type="Proteomes" id="UP000009073">
    <property type="component" value="Chromosome"/>
</dbReference>
<dbReference type="GO" id="GO:0005737">
    <property type="term" value="C:cytoplasm"/>
    <property type="evidence" value="ECO:0007669"/>
    <property type="project" value="UniProtKB-SubCell"/>
</dbReference>
<dbReference type="GO" id="GO:0005524">
    <property type="term" value="F:ATP binding"/>
    <property type="evidence" value="ECO:0007669"/>
    <property type="project" value="UniProtKB-UniRule"/>
</dbReference>
<dbReference type="GO" id="GO:0004821">
    <property type="term" value="F:histidine-tRNA ligase activity"/>
    <property type="evidence" value="ECO:0007669"/>
    <property type="project" value="UniProtKB-UniRule"/>
</dbReference>
<dbReference type="GO" id="GO:0006427">
    <property type="term" value="P:histidyl-tRNA aminoacylation"/>
    <property type="evidence" value="ECO:0007669"/>
    <property type="project" value="UniProtKB-UniRule"/>
</dbReference>
<dbReference type="CDD" id="cd00773">
    <property type="entry name" value="HisRS-like_core"/>
    <property type="match status" value="1"/>
</dbReference>
<dbReference type="CDD" id="cd00859">
    <property type="entry name" value="HisRS_anticodon"/>
    <property type="match status" value="1"/>
</dbReference>
<dbReference type="FunFam" id="3.30.930.10:FF:000005">
    <property type="entry name" value="Histidine--tRNA ligase"/>
    <property type="match status" value="1"/>
</dbReference>
<dbReference type="Gene3D" id="3.40.50.800">
    <property type="entry name" value="Anticodon-binding domain"/>
    <property type="match status" value="1"/>
</dbReference>
<dbReference type="Gene3D" id="3.30.930.10">
    <property type="entry name" value="Bira Bifunctional Protein, Domain 2"/>
    <property type="match status" value="1"/>
</dbReference>
<dbReference type="HAMAP" id="MF_00127">
    <property type="entry name" value="His_tRNA_synth"/>
    <property type="match status" value="1"/>
</dbReference>
<dbReference type="InterPro" id="IPR006195">
    <property type="entry name" value="aa-tRNA-synth_II"/>
</dbReference>
<dbReference type="InterPro" id="IPR045864">
    <property type="entry name" value="aa-tRNA-synth_II/BPL/LPL"/>
</dbReference>
<dbReference type="InterPro" id="IPR004154">
    <property type="entry name" value="Anticodon-bd"/>
</dbReference>
<dbReference type="InterPro" id="IPR036621">
    <property type="entry name" value="Anticodon-bd_dom_sf"/>
</dbReference>
<dbReference type="InterPro" id="IPR015807">
    <property type="entry name" value="His-tRNA-ligase"/>
</dbReference>
<dbReference type="InterPro" id="IPR041715">
    <property type="entry name" value="HisRS-like_core"/>
</dbReference>
<dbReference type="InterPro" id="IPR004516">
    <property type="entry name" value="HisRS/HisZ"/>
</dbReference>
<dbReference type="InterPro" id="IPR033656">
    <property type="entry name" value="HisRS_anticodon"/>
</dbReference>
<dbReference type="NCBIfam" id="TIGR00442">
    <property type="entry name" value="hisS"/>
    <property type="match status" value="1"/>
</dbReference>
<dbReference type="PANTHER" id="PTHR43707:SF1">
    <property type="entry name" value="HISTIDINE--TRNA LIGASE, MITOCHONDRIAL-RELATED"/>
    <property type="match status" value="1"/>
</dbReference>
<dbReference type="PANTHER" id="PTHR43707">
    <property type="entry name" value="HISTIDYL-TRNA SYNTHETASE"/>
    <property type="match status" value="1"/>
</dbReference>
<dbReference type="Pfam" id="PF03129">
    <property type="entry name" value="HGTP_anticodon"/>
    <property type="match status" value="1"/>
</dbReference>
<dbReference type="Pfam" id="PF13393">
    <property type="entry name" value="tRNA-synt_His"/>
    <property type="match status" value="1"/>
</dbReference>
<dbReference type="PIRSF" id="PIRSF001549">
    <property type="entry name" value="His-tRNA_synth"/>
    <property type="match status" value="1"/>
</dbReference>
<dbReference type="SUPFAM" id="SSF52954">
    <property type="entry name" value="Class II aaRS ABD-related"/>
    <property type="match status" value="1"/>
</dbReference>
<dbReference type="SUPFAM" id="SSF55681">
    <property type="entry name" value="Class II aaRS and biotin synthetases"/>
    <property type="match status" value="1"/>
</dbReference>
<dbReference type="PROSITE" id="PS50862">
    <property type="entry name" value="AA_TRNA_LIGASE_II"/>
    <property type="match status" value="1"/>
</dbReference>
<reference key="1">
    <citation type="submission" date="2009-05" db="EMBL/GenBank/DDBJ databases">
        <title>Complete sequence of Tolumonas auensis DSM 9187.</title>
        <authorList>
            <consortium name="US DOE Joint Genome Institute"/>
            <person name="Lucas S."/>
            <person name="Copeland A."/>
            <person name="Lapidus A."/>
            <person name="Glavina del Rio T."/>
            <person name="Tice H."/>
            <person name="Bruce D."/>
            <person name="Goodwin L."/>
            <person name="Pitluck S."/>
            <person name="Chertkov O."/>
            <person name="Brettin T."/>
            <person name="Detter J.C."/>
            <person name="Han C."/>
            <person name="Larimer F."/>
            <person name="Land M."/>
            <person name="Hauser L."/>
            <person name="Kyrpides N."/>
            <person name="Mikhailova N."/>
            <person name="Spring S."/>
            <person name="Beller H."/>
        </authorList>
    </citation>
    <scope>NUCLEOTIDE SEQUENCE [LARGE SCALE GENOMIC DNA]</scope>
    <source>
        <strain>DSM 9187 / NBRC 110442 / TA 4</strain>
    </source>
</reference>
<name>SYH_TOLAT</name>
<feature type="chain" id="PRO_1000203154" description="Histidine--tRNA ligase">
    <location>
        <begin position="1"/>
        <end position="425"/>
    </location>
</feature>
<accession>C4LC38</accession>
<organism>
    <name type="scientific">Tolumonas auensis (strain DSM 9187 / NBRC 110442 / TA 4)</name>
    <dbReference type="NCBI Taxonomy" id="595494"/>
    <lineage>
        <taxon>Bacteria</taxon>
        <taxon>Pseudomonadati</taxon>
        <taxon>Pseudomonadota</taxon>
        <taxon>Gammaproteobacteria</taxon>
        <taxon>Aeromonadales</taxon>
        <taxon>Aeromonadaceae</taxon>
        <taxon>Tolumonas</taxon>
    </lineage>
</organism>
<proteinExistence type="inferred from homology"/>
<protein>
    <recommendedName>
        <fullName evidence="1">Histidine--tRNA ligase</fullName>
        <ecNumber evidence="1">6.1.1.21</ecNumber>
    </recommendedName>
    <alternativeName>
        <fullName evidence="1">Histidyl-tRNA synthetase</fullName>
        <shortName evidence="1">HisRS</shortName>
    </alternativeName>
</protein>
<comment type="catalytic activity">
    <reaction evidence="1">
        <text>tRNA(His) + L-histidine + ATP = L-histidyl-tRNA(His) + AMP + diphosphate + H(+)</text>
        <dbReference type="Rhea" id="RHEA:17313"/>
        <dbReference type="Rhea" id="RHEA-COMP:9665"/>
        <dbReference type="Rhea" id="RHEA-COMP:9689"/>
        <dbReference type="ChEBI" id="CHEBI:15378"/>
        <dbReference type="ChEBI" id="CHEBI:30616"/>
        <dbReference type="ChEBI" id="CHEBI:33019"/>
        <dbReference type="ChEBI" id="CHEBI:57595"/>
        <dbReference type="ChEBI" id="CHEBI:78442"/>
        <dbReference type="ChEBI" id="CHEBI:78527"/>
        <dbReference type="ChEBI" id="CHEBI:456215"/>
        <dbReference type="EC" id="6.1.1.21"/>
    </reaction>
</comment>
<comment type="subunit">
    <text evidence="1">Homodimer.</text>
</comment>
<comment type="subcellular location">
    <subcellularLocation>
        <location evidence="1">Cytoplasm</location>
    </subcellularLocation>
</comment>
<comment type="similarity">
    <text evidence="1">Belongs to the class-II aminoacyl-tRNA synthetase family.</text>
</comment>
<gene>
    <name evidence="1" type="primary">hisS</name>
    <name type="ordered locus">Tola_0889</name>
</gene>
<sequence>MAKQIQAIRGMNDCLPEQTPVWQMVEATLRRVVSSYGYSEIRMPVVEMTNLFQRAIGEVTDVVEKEMYTFNDRNGDSLTLRPEGTAGCVRACIEHGLVYNQERRLWYVGPMFRHERPQKGRYRQFHQFGVEVFGLTGPDIDAELIMMTARLWRELGIAQFTTLQLNTLGSSAERAAYRDALVTFLEQHKESLDEESQRRMYSNPLRVLDTKNPQVQEILQHAPTMADYFGEETKAHFSGLKALLDAAGIAYQVNERLVRGLDYYNYTVFEWVTDSLGAQGTICGGGRYDGLVEQLGGQATPAIGFAMGLERLTLMLETLEQIRNIPSTVDVYICMAGEGTLTAGLLLAEKLRSERPQLRVMTHCGGGNFKKQMKRADKVEARIALILGETEVAEQKVTVKFLRDQVEQQTVDVTALLPILAQLGE</sequence>
<evidence type="ECO:0000255" key="1">
    <source>
        <dbReference type="HAMAP-Rule" id="MF_00127"/>
    </source>
</evidence>